<organism>
    <name type="scientific">Escherichia coli O157:H7 (strain EC4115 / EHEC)</name>
    <dbReference type="NCBI Taxonomy" id="444450"/>
    <lineage>
        <taxon>Bacteria</taxon>
        <taxon>Pseudomonadati</taxon>
        <taxon>Pseudomonadota</taxon>
        <taxon>Gammaproteobacteria</taxon>
        <taxon>Enterobacterales</taxon>
        <taxon>Enterobacteriaceae</taxon>
        <taxon>Escherichia</taxon>
    </lineage>
</organism>
<protein>
    <recommendedName>
        <fullName evidence="1">Pyrimidine/purine nucleoside phosphorylase</fullName>
        <ecNumber evidence="1">2.4.2.1</ecNumber>
        <ecNumber evidence="1">2.4.2.2</ecNumber>
    </recommendedName>
    <alternativeName>
        <fullName evidence="1">Adenosine phosphorylase</fullName>
    </alternativeName>
    <alternativeName>
        <fullName evidence="1">Cytidine phosphorylase</fullName>
    </alternativeName>
    <alternativeName>
        <fullName evidence="1">Guanosine phosphorylase</fullName>
    </alternativeName>
    <alternativeName>
        <fullName evidence="1">Inosine phosphorylase</fullName>
    </alternativeName>
    <alternativeName>
        <fullName evidence="1">Thymidine phosphorylase</fullName>
    </alternativeName>
    <alternativeName>
        <fullName evidence="1">Uridine phosphorylase</fullName>
    </alternativeName>
    <alternativeName>
        <fullName evidence="1">Xanthosine phosphorylase</fullName>
    </alternativeName>
</protein>
<reference key="1">
    <citation type="journal article" date="2011" name="Proc. Natl. Acad. Sci. U.S.A.">
        <title>Genomic anatomy of Escherichia coli O157:H7 outbreaks.</title>
        <authorList>
            <person name="Eppinger M."/>
            <person name="Mammel M.K."/>
            <person name="Leclerc J.E."/>
            <person name="Ravel J."/>
            <person name="Cebula T.A."/>
        </authorList>
    </citation>
    <scope>NUCLEOTIDE SEQUENCE [LARGE SCALE GENOMIC DNA]</scope>
    <source>
        <strain>EC4115 / EHEC</strain>
    </source>
</reference>
<accession>B5Z2U3</accession>
<gene>
    <name evidence="1" type="primary">ppnP</name>
    <name type="ordered locus">ECH74115_0465</name>
</gene>
<proteinExistence type="inferred from homology"/>
<feature type="chain" id="PRO_1000198660" description="Pyrimidine/purine nucleoside phosphorylase">
    <location>
        <begin position="1"/>
        <end position="94"/>
    </location>
</feature>
<sequence length="94" mass="10234">MLQSNEYFSGKVKSIGFSSSSTGRASVGVMVEGEYTFSTAEPEEMTVISGALNVLLPDATDWQVYEAGSVFNVPGHSEFHLQVAEPTSYLCRYL</sequence>
<comment type="function">
    <text evidence="1">Catalyzes the phosphorolysis of diverse nucleosides, yielding D-ribose 1-phosphate and the respective free bases. Can use uridine, adenosine, guanosine, cytidine, thymidine, inosine and xanthosine as substrates. Also catalyzes the reverse reactions.</text>
</comment>
<comment type="catalytic activity">
    <reaction evidence="1">
        <text>a purine D-ribonucleoside + phosphate = a purine nucleobase + alpha-D-ribose 1-phosphate</text>
        <dbReference type="Rhea" id="RHEA:19805"/>
        <dbReference type="ChEBI" id="CHEBI:26386"/>
        <dbReference type="ChEBI" id="CHEBI:43474"/>
        <dbReference type="ChEBI" id="CHEBI:57720"/>
        <dbReference type="ChEBI" id="CHEBI:142355"/>
        <dbReference type="EC" id="2.4.2.1"/>
    </reaction>
</comment>
<comment type="catalytic activity">
    <reaction evidence="1">
        <text>adenosine + phosphate = alpha-D-ribose 1-phosphate + adenine</text>
        <dbReference type="Rhea" id="RHEA:27642"/>
        <dbReference type="ChEBI" id="CHEBI:16335"/>
        <dbReference type="ChEBI" id="CHEBI:16708"/>
        <dbReference type="ChEBI" id="CHEBI:43474"/>
        <dbReference type="ChEBI" id="CHEBI:57720"/>
        <dbReference type="EC" id="2.4.2.1"/>
    </reaction>
</comment>
<comment type="catalytic activity">
    <reaction evidence="1">
        <text>cytidine + phosphate = cytosine + alpha-D-ribose 1-phosphate</text>
        <dbReference type="Rhea" id="RHEA:52540"/>
        <dbReference type="ChEBI" id="CHEBI:16040"/>
        <dbReference type="ChEBI" id="CHEBI:17562"/>
        <dbReference type="ChEBI" id="CHEBI:43474"/>
        <dbReference type="ChEBI" id="CHEBI:57720"/>
        <dbReference type="EC" id="2.4.2.2"/>
    </reaction>
</comment>
<comment type="catalytic activity">
    <reaction evidence="1">
        <text>guanosine + phosphate = alpha-D-ribose 1-phosphate + guanine</text>
        <dbReference type="Rhea" id="RHEA:13233"/>
        <dbReference type="ChEBI" id="CHEBI:16235"/>
        <dbReference type="ChEBI" id="CHEBI:16750"/>
        <dbReference type="ChEBI" id="CHEBI:43474"/>
        <dbReference type="ChEBI" id="CHEBI:57720"/>
        <dbReference type="EC" id="2.4.2.1"/>
    </reaction>
</comment>
<comment type="catalytic activity">
    <reaction evidence="1">
        <text>inosine + phosphate = alpha-D-ribose 1-phosphate + hypoxanthine</text>
        <dbReference type="Rhea" id="RHEA:27646"/>
        <dbReference type="ChEBI" id="CHEBI:17368"/>
        <dbReference type="ChEBI" id="CHEBI:17596"/>
        <dbReference type="ChEBI" id="CHEBI:43474"/>
        <dbReference type="ChEBI" id="CHEBI:57720"/>
        <dbReference type="EC" id="2.4.2.1"/>
    </reaction>
</comment>
<comment type="catalytic activity">
    <reaction evidence="1">
        <text>thymidine + phosphate = 2-deoxy-alpha-D-ribose 1-phosphate + thymine</text>
        <dbReference type="Rhea" id="RHEA:16037"/>
        <dbReference type="ChEBI" id="CHEBI:17748"/>
        <dbReference type="ChEBI" id="CHEBI:17821"/>
        <dbReference type="ChEBI" id="CHEBI:43474"/>
        <dbReference type="ChEBI" id="CHEBI:57259"/>
        <dbReference type="EC" id="2.4.2.2"/>
    </reaction>
</comment>
<comment type="catalytic activity">
    <reaction evidence="1">
        <text>uridine + phosphate = alpha-D-ribose 1-phosphate + uracil</text>
        <dbReference type="Rhea" id="RHEA:24388"/>
        <dbReference type="ChEBI" id="CHEBI:16704"/>
        <dbReference type="ChEBI" id="CHEBI:17568"/>
        <dbReference type="ChEBI" id="CHEBI:43474"/>
        <dbReference type="ChEBI" id="CHEBI:57720"/>
        <dbReference type="EC" id="2.4.2.2"/>
    </reaction>
</comment>
<comment type="catalytic activity">
    <reaction evidence="1">
        <text>xanthosine + phosphate = alpha-D-ribose 1-phosphate + xanthine</text>
        <dbReference type="Rhea" id="RHEA:27638"/>
        <dbReference type="ChEBI" id="CHEBI:17712"/>
        <dbReference type="ChEBI" id="CHEBI:18107"/>
        <dbReference type="ChEBI" id="CHEBI:43474"/>
        <dbReference type="ChEBI" id="CHEBI:57720"/>
        <dbReference type="EC" id="2.4.2.1"/>
    </reaction>
</comment>
<comment type="similarity">
    <text evidence="1">Belongs to the nucleoside phosphorylase PpnP family.</text>
</comment>
<name>PPNP_ECO5E</name>
<keyword id="KW-0328">Glycosyltransferase</keyword>
<keyword id="KW-0808">Transferase</keyword>
<evidence type="ECO:0000255" key="1">
    <source>
        <dbReference type="HAMAP-Rule" id="MF_01537"/>
    </source>
</evidence>
<dbReference type="EC" id="2.4.2.1" evidence="1"/>
<dbReference type="EC" id="2.4.2.2" evidence="1"/>
<dbReference type="EMBL" id="CP001164">
    <property type="protein sequence ID" value="ACI35096.1"/>
    <property type="molecule type" value="Genomic_DNA"/>
</dbReference>
<dbReference type="RefSeq" id="WP_000941942.1">
    <property type="nucleotide sequence ID" value="NC_011353.1"/>
</dbReference>
<dbReference type="SMR" id="B5Z2U3"/>
<dbReference type="GeneID" id="93777070"/>
<dbReference type="KEGG" id="ecf:ECH74115_0465"/>
<dbReference type="HOGENOM" id="CLU_157874_0_0_6"/>
<dbReference type="GO" id="GO:0005829">
    <property type="term" value="C:cytosol"/>
    <property type="evidence" value="ECO:0007669"/>
    <property type="project" value="TreeGrafter"/>
</dbReference>
<dbReference type="GO" id="GO:0047975">
    <property type="term" value="F:guanosine phosphorylase activity"/>
    <property type="evidence" value="ECO:0007669"/>
    <property type="project" value="UniProtKB-EC"/>
</dbReference>
<dbReference type="GO" id="GO:0004731">
    <property type="term" value="F:purine-nucleoside phosphorylase activity"/>
    <property type="evidence" value="ECO:0007669"/>
    <property type="project" value="UniProtKB-UniRule"/>
</dbReference>
<dbReference type="GO" id="GO:0009032">
    <property type="term" value="F:thymidine phosphorylase activity"/>
    <property type="evidence" value="ECO:0007669"/>
    <property type="project" value="UniProtKB-EC"/>
</dbReference>
<dbReference type="GO" id="GO:0004850">
    <property type="term" value="F:uridine phosphorylase activity"/>
    <property type="evidence" value="ECO:0007669"/>
    <property type="project" value="UniProtKB-EC"/>
</dbReference>
<dbReference type="CDD" id="cd20296">
    <property type="entry name" value="cupin_PpnP-like"/>
    <property type="match status" value="1"/>
</dbReference>
<dbReference type="FunFam" id="2.60.120.10:FF:000016">
    <property type="entry name" value="Pyrimidine/purine nucleoside phosphorylase"/>
    <property type="match status" value="1"/>
</dbReference>
<dbReference type="Gene3D" id="2.60.120.10">
    <property type="entry name" value="Jelly Rolls"/>
    <property type="match status" value="1"/>
</dbReference>
<dbReference type="HAMAP" id="MF_01537">
    <property type="entry name" value="Nucleos_phosphorylase_PpnP"/>
    <property type="match status" value="1"/>
</dbReference>
<dbReference type="InterPro" id="IPR009664">
    <property type="entry name" value="Ppnp"/>
</dbReference>
<dbReference type="InterPro" id="IPR014710">
    <property type="entry name" value="RmlC-like_jellyroll"/>
</dbReference>
<dbReference type="InterPro" id="IPR011051">
    <property type="entry name" value="RmlC_Cupin_sf"/>
</dbReference>
<dbReference type="NCBIfam" id="NF007875">
    <property type="entry name" value="PRK10579.1"/>
    <property type="match status" value="1"/>
</dbReference>
<dbReference type="PANTHER" id="PTHR36540">
    <property type="entry name" value="PYRIMIDINE/PURINE NUCLEOSIDE PHOSPHORYLASE"/>
    <property type="match status" value="1"/>
</dbReference>
<dbReference type="PANTHER" id="PTHR36540:SF1">
    <property type="entry name" value="PYRIMIDINE_PURINE NUCLEOSIDE PHOSPHORYLASE"/>
    <property type="match status" value="1"/>
</dbReference>
<dbReference type="Pfam" id="PF06865">
    <property type="entry name" value="Ppnp"/>
    <property type="match status" value="1"/>
</dbReference>
<dbReference type="SUPFAM" id="SSF51182">
    <property type="entry name" value="RmlC-like cupins"/>
    <property type="match status" value="1"/>
</dbReference>